<feature type="chain" id="PRO_0000300794" description="Homoserine kinase">
    <location>
        <begin position="1"/>
        <end position="322"/>
    </location>
</feature>
<name>KHSE_CHESB</name>
<comment type="catalytic activity">
    <reaction evidence="1">
        <text>L-homoserine + ATP = O-phospho-L-homoserine + ADP + H(+)</text>
        <dbReference type="Rhea" id="RHEA:13985"/>
        <dbReference type="ChEBI" id="CHEBI:15378"/>
        <dbReference type="ChEBI" id="CHEBI:30616"/>
        <dbReference type="ChEBI" id="CHEBI:57476"/>
        <dbReference type="ChEBI" id="CHEBI:57590"/>
        <dbReference type="ChEBI" id="CHEBI:456216"/>
        <dbReference type="EC" id="2.7.1.39"/>
    </reaction>
</comment>
<comment type="pathway">
    <text evidence="1">Amino-acid biosynthesis; L-threonine biosynthesis; L-threonine from L-aspartate: step 4/5.</text>
</comment>
<comment type="similarity">
    <text evidence="1">Belongs to the pseudomonas-type ThrB family.</text>
</comment>
<proteinExistence type="inferred from homology"/>
<protein>
    <recommendedName>
        <fullName evidence="1">Homoserine kinase</fullName>
        <shortName evidence="1">HK</shortName>
        <shortName evidence="1">HSK</shortName>
        <ecNumber evidence="1">2.7.1.39</ecNumber>
    </recommendedName>
</protein>
<evidence type="ECO:0000255" key="1">
    <source>
        <dbReference type="HAMAP-Rule" id="MF_00301"/>
    </source>
</evidence>
<keyword id="KW-0028">Amino-acid biosynthesis</keyword>
<keyword id="KW-0067">ATP-binding</keyword>
<keyword id="KW-0418">Kinase</keyword>
<keyword id="KW-0547">Nucleotide-binding</keyword>
<keyword id="KW-0791">Threonine biosynthesis</keyword>
<keyword id="KW-0808">Transferase</keyword>
<accession>Q11KC6</accession>
<gene>
    <name evidence="1" type="primary">thrB</name>
    <name type="ordered locus">Meso_0749</name>
</gene>
<dbReference type="EC" id="2.7.1.39" evidence="1"/>
<dbReference type="EMBL" id="CP000390">
    <property type="protein sequence ID" value="ABG62149.1"/>
    <property type="molecule type" value="Genomic_DNA"/>
</dbReference>
<dbReference type="SMR" id="Q11KC6"/>
<dbReference type="STRING" id="266779.Meso_0749"/>
<dbReference type="KEGG" id="mes:Meso_0749"/>
<dbReference type="eggNOG" id="COG2334">
    <property type="taxonomic scope" value="Bacteria"/>
</dbReference>
<dbReference type="HOGENOM" id="CLU_053300_0_0_5"/>
<dbReference type="OrthoDB" id="9777460at2"/>
<dbReference type="UniPathway" id="UPA00050">
    <property type="reaction ID" value="UER00064"/>
</dbReference>
<dbReference type="GO" id="GO:0005524">
    <property type="term" value="F:ATP binding"/>
    <property type="evidence" value="ECO:0007669"/>
    <property type="project" value="UniProtKB-KW"/>
</dbReference>
<dbReference type="GO" id="GO:0004413">
    <property type="term" value="F:homoserine kinase activity"/>
    <property type="evidence" value="ECO:0007669"/>
    <property type="project" value="UniProtKB-UniRule"/>
</dbReference>
<dbReference type="GO" id="GO:0009088">
    <property type="term" value="P:threonine biosynthetic process"/>
    <property type="evidence" value="ECO:0007669"/>
    <property type="project" value="UniProtKB-UniRule"/>
</dbReference>
<dbReference type="CDD" id="cd05153">
    <property type="entry name" value="HomoserineK_II"/>
    <property type="match status" value="1"/>
</dbReference>
<dbReference type="Gene3D" id="3.90.1200.10">
    <property type="match status" value="1"/>
</dbReference>
<dbReference type="Gene3D" id="3.30.200.20">
    <property type="entry name" value="Phosphorylase Kinase, domain 1"/>
    <property type="match status" value="1"/>
</dbReference>
<dbReference type="HAMAP" id="MF_00301">
    <property type="entry name" value="Homoser_kinase_2"/>
    <property type="match status" value="1"/>
</dbReference>
<dbReference type="InterPro" id="IPR002575">
    <property type="entry name" value="Aminoglycoside_PTrfase"/>
</dbReference>
<dbReference type="InterPro" id="IPR005280">
    <property type="entry name" value="Homoserine_kinase_II"/>
</dbReference>
<dbReference type="InterPro" id="IPR011009">
    <property type="entry name" value="Kinase-like_dom_sf"/>
</dbReference>
<dbReference type="InterPro" id="IPR050249">
    <property type="entry name" value="Pseudomonas-type_ThrB"/>
</dbReference>
<dbReference type="NCBIfam" id="NF003558">
    <property type="entry name" value="PRK05231.1"/>
    <property type="match status" value="1"/>
</dbReference>
<dbReference type="NCBIfam" id="TIGR00938">
    <property type="entry name" value="thrB_alt"/>
    <property type="match status" value="1"/>
</dbReference>
<dbReference type="PANTHER" id="PTHR21064:SF6">
    <property type="entry name" value="AMINOGLYCOSIDE PHOSPHOTRANSFERASE DOMAIN-CONTAINING PROTEIN"/>
    <property type="match status" value="1"/>
</dbReference>
<dbReference type="PANTHER" id="PTHR21064">
    <property type="entry name" value="AMINOGLYCOSIDE PHOSPHOTRANSFERASE DOMAIN-CONTAINING PROTEIN-RELATED"/>
    <property type="match status" value="1"/>
</dbReference>
<dbReference type="Pfam" id="PF01636">
    <property type="entry name" value="APH"/>
    <property type="match status" value="1"/>
</dbReference>
<dbReference type="SUPFAM" id="SSF56112">
    <property type="entry name" value="Protein kinase-like (PK-like)"/>
    <property type="match status" value="1"/>
</dbReference>
<organism>
    <name type="scientific">Chelativorans sp. (strain BNC1)</name>
    <dbReference type="NCBI Taxonomy" id="266779"/>
    <lineage>
        <taxon>Bacteria</taxon>
        <taxon>Pseudomonadati</taxon>
        <taxon>Pseudomonadota</taxon>
        <taxon>Alphaproteobacteria</taxon>
        <taxon>Hyphomicrobiales</taxon>
        <taxon>Phyllobacteriaceae</taxon>
        <taxon>Chelativorans</taxon>
    </lineage>
</organism>
<sequence>MAVYTDISEEELTAFLRHYPVGKLLSYKGIAEGTENSNYLLHTTAGAYILTLYERRVDRSDLPFFLGLMEHLARKGVSCPLPVKRLDDGLIGELAGRPAALITFLEGMWMRRPTALHCGQVGKALADLHQAAEDFPLKRPNALGPEGWRRLWEGAKARADEVEPGLAREVDAEFALLERDWPKDLPSGVIHADLFPDNVFFLGGELSGLIDFYFACNDLLAYDLATCLNAWCFEKDISYNLTKGAALLAGYQAVRPLTREEIEMLPLLARGSALRFMLTRLYDWLTIPDGALVKKRDPLEYLRRLRFHRQVRTASEYGIELA</sequence>
<reference key="1">
    <citation type="submission" date="2006-06" db="EMBL/GenBank/DDBJ databases">
        <title>Complete sequence of chromosome of Mesorhizobium sp. BNC1.</title>
        <authorList>
            <consortium name="US DOE Joint Genome Institute"/>
            <person name="Copeland A."/>
            <person name="Lucas S."/>
            <person name="Lapidus A."/>
            <person name="Barry K."/>
            <person name="Detter J.C."/>
            <person name="Glavina del Rio T."/>
            <person name="Hammon N."/>
            <person name="Israni S."/>
            <person name="Dalin E."/>
            <person name="Tice H."/>
            <person name="Pitluck S."/>
            <person name="Chertkov O."/>
            <person name="Brettin T."/>
            <person name="Bruce D."/>
            <person name="Han C."/>
            <person name="Tapia R."/>
            <person name="Gilna P."/>
            <person name="Schmutz J."/>
            <person name="Larimer F."/>
            <person name="Land M."/>
            <person name="Hauser L."/>
            <person name="Kyrpides N."/>
            <person name="Mikhailova N."/>
            <person name="Richardson P."/>
        </authorList>
    </citation>
    <scope>NUCLEOTIDE SEQUENCE [LARGE SCALE GENOMIC DNA]</scope>
    <source>
        <strain>BNC1</strain>
    </source>
</reference>